<sequence>MISTVALFWALCVVCIVNMARYFSSLRALLVVLRNCDPLLYQYVDGGGFFTSHGQPNKQVRLVWYIYAQRYRDHHDDEFIRRCERVRRQFILTSALCGLVVVSLIALMIWH</sequence>
<name>USPB_ECOHS</name>
<feature type="chain" id="PRO_1000064872" description="Universal stress protein B">
    <location>
        <begin position="1"/>
        <end position="111"/>
    </location>
</feature>
<feature type="transmembrane region" description="Helical" evidence="1">
    <location>
        <begin position="1"/>
        <end position="21"/>
    </location>
</feature>
<feature type="transmembrane region" description="Helical" evidence="1">
    <location>
        <begin position="90"/>
        <end position="110"/>
    </location>
</feature>
<evidence type="ECO:0000255" key="1">
    <source>
        <dbReference type="HAMAP-Rule" id="MF_01088"/>
    </source>
</evidence>
<protein>
    <recommendedName>
        <fullName evidence="1">Universal stress protein B</fullName>
    </recommendedName>
</protein>
<keyword id="KW-0997">Cell inner membrane</keyword>
<keyword id="KW-1003">Cell membrane</keyword>
<keyword id="KW-0472">Membrane</keyword>
<keyword id="KW-0812">Transmembrane</keyword>
<keyword id="KW-1133">Transmembrane helix</keyword>
<organism>
    <name type="scientific">Escherichia coli O9:H4 (strain HS)</name>
    <dbReference type="NCBI Taxonomy" id="331112"/>
    <lineage>
        <taxon>Bacteria</taxon>
        <taxon>Pseudomonadati</taxon>
        <taxon>Pseudomonadota</taxon>
        <taxon>Gammaproteobacteria</taxon>
        <taxon>Enterobacterales</taxon>
        <taxon>Enterobacteriaceae</taxon>
        <taxon>Escherichia</taxon>
    </lineage>
</organism>
<dbReference type="EMBL" id="CP000802">
    <property type="protein sequence ID" value="ABV07905.1"/>
    <property type="molecule type" value="Genomic_DNA"/>
</dbReference>
<dbReference type="RefSeq" id="WP_000626187.1">
    <property type="nucleotide sequence ID" value="NC_009800.1"/>
</dbReference>
<dbReference type="SMR" id="A8A5V1"/>
<dbReference type="GeneID" id="93778499"/>
<dbReference type="KEGG" id="ecx:EcHS_A3694"/>
<dbReference type="HOGENOM" id="CLU_151816_0_0_6"/>
<dbReference type="GO" id="GO:0005886">
    <property type="term" value="C:plasma membrane"/>
    <property type="evidence" value="ECO:0007669"/>
    <property type="project" value="UniProtKB-SubCell"/>
</dbReference>
<dbReference type="HAMAP" id="MF_01088">
    <property type="entry name" value="UspB"/>
    <property type="match status" value="1"/>
</dbReference>
<dbReference type="InterPro" id="IPR019598">
    <property type="entry name" value="Universal_stress_protein_B"/>
</dbReference>
<dbReference type="NCBIfam" id="NF003435">
    <property type="entry name" value="PRK04960.1"/>
    <property type="match status" value="1"/>
</dbReference>
<dbReference type="Pfam" id="PF10625">
    <property type="entry name" value="UspB"/>
    <property type="match status" value="1"/>
</dbReference>
<proteinExistence type="inferred from homology"/>
<gene>
    <name evidence="1" type="primary">uspB</name>
    <name type="ordered locus">EcHS_A3694</name>
</gene>
<accession>A8A5V1</accession>
<comment type="subcellular location">
    <subcellularLocation>
        <location evidence="1">Cell inner membrane</location>
        <topology evidence="1">Multi-pass membrane protein</topology>
    </subcellularLocation>
</comment>
<comment type="similarity">
    <text evidence="1">Belongs to the universal stress protein B family.</text>
</comment>
<reference key="1">
    <citation type="journal article" date="2008" name="J. Bacteriol.">
        <title>The pangenome structure of Escherichia coli: comparative genomic analysis of E. coli commensal and pathogenic isolates.</title>
        <authorList>
            <person name="Rasko D.A."/>
            <person name="Rosovitz M.J."/>
            <person name="Myers G.S.A."/>
            <person name="Mongodin E.F."/>
            <person name="Fricke W.F."/>
            <person name="Gajer P."/>
            <person name="Crabtree J."/>
            <person name="Sebaihia M."/>
            <person name="Thomson N.R."/>
            <person name="Chaudhuri R."/>
            <person name="Henderson I.R."/>
            <person name="Sperandio V."/>
            <person name="Ravel J."/>
        </authorList>
    </citation>
    <scope>NUCLEOTIDE SEQUENCE [LARGE SCALE GENOMIC DNA]</scope>
    <source>
        <strain>HS</strain>
    </source>
</reference>